<evidence type="ECO:0000250" key="1">
    <source>
        <dbReference type="UniProtKB" id="A0A1L8FDW4"/>
    </source>
</evidence>
<evidence type="ECO:0000250" key="2">
    <source>
        <dbReference type="UniProtKB" id="P35056"/>
    </source>
</evidence>
<evidence type="ECO:0000250" key="3">
    <source>
        <dbReference type="UniProtKB" id="P50542"/>
    </source>
</evidence>
<evidence type="ECO:0000256" key="4">
    <source>
        <dbReference type="SAM" id="MobiDB-lite"/>
    </source>
</evidence>
<evidence type="ECO:0000305" key="5"/>
<keyword id="KW-0963">Cytoplasm</keyword>
<keyword id="KW-1017">Isopeptide bond</keyword>
<keyword id="KW-0576">Peroxisome</keyword>
<keyword id="KW-0653">Protein transport</keyword>
<keyword id="KW-0677">Repeat</keyword>
<keyword id="KW-0882">Thioester bond</keyword>
<keyword id="KW-0802">TPR repeat</keyword>
<keyword id="KW-0811">Translocation</keyword>
<keyword id="KW-0813">Transport</keyword>
<keyword id="KW-0832">Ubl conjugation</keyword>
<accession>Q01495</accession>
<accession>Q01496</accession>
<dbReference type="EMBL" id="U22930">
    <property type="protein sequence ID" value="AAC49059.1"/>
    <property type="molecule type" value="Genomic_DNA"/>
</dbReference>
<dbReference type="EMBL" id="U26678">
    <property type="protein sequence ID" value="AAC49040.1"/>
    <property type="molecule type" value="Genomic_DNA"/>
</dbReference>
<dbReference type="PIR" id="JC4177">
    <property type="entry name" value="JC4177"/>
</dbReference>
<dbReference type="SMR" id="Q01495"/>
<dbReference type="ELM" id="Q01495"/>
<dbReference type="IntAct" id="Q01495">
    <property type="interactions" value="1"/>
</dbReference>
<dbReference type="MINT" id="Q01495"/>
<dbReference type="GO" id="GO:0005829">
    <property type="term" value="C:cytosol"/>
    <property type="evidence" value="ECO:0007669"/>
    <property type="project" value="UniProtKB-SubCell"/>
</dbReference>
<dbReference type="GO" id="GO:0005782">
    <property type="term" value="C:peroxisomal matrix"/>
    <property type="evidence" value="ECO:0007669"/>
    <property type="project" value="UniProtKB-SubCell"/>
</dbReference>
<dbReference type="GO" id="GO:0005778">
    <property type="term" value="C:peroxisomal membrane"/>
    <property type="evidence" value="ECO:0007669"/>
    <property type="project" value="TreeGrafter"/>
</dbReference>
<dbReference type="GO" id="GO:0005052">
    <property type="term" value="F:peroxisome matrix targeting signal-1 binding"/>
    <property type="evidence" value="ECO:0007669"/>
    <property type="project" value="TreeGrafter"/>
</dbReference>
<dbReference type="GO" id="GO:0016560">
    <property type="term" value="P:protein import into peroxisome matrix, docking"/>
    <property type="evidence" value="ECO:0007669"/>
    <property type="project" value="TreeGrafter"/>
</dbReference>
<dbReference type="Gene3D" id="1.25.40.10">
    <property type="entry name" value="Tetratricopeptide repeat domain"/>
    <property type="match status" value="1"/>
</dbReference>
<dbReference type="InterPro" id="IPR024111">
    <property type="entry name" value="PEX5/PEX5L"/>
</dbReference>
<dbReference type="InterPro" id="IPR011990">
    <property type="entry name" value="TPR-like_helical_dom_sf"/>
</dbReference>
<dbReference type="InterPro" id="IPR019734">
    <property type="entry name" value="TPR_rpt"/>
</dbReference>
<dbReference type="PANTHER" id="PTHR10130:SF0">
    <property type="entry name" value="GH08708P"/>
    <property type="match status" value="1"/>
</dbReference>
<dbReference type="PANTHER" id="PTHR10130">
    <property type="entry name" value="PEROXISOMAL TARGETING SIGNAL 1 RECEPTOR PEX5"/>
    <property type="match status" value="1"/>
</dbReference>
<dbReference type="Pfam" id="PF00515">
    <property type="entry name" value="TPR_1"/>
    <property type="match status" value="1"/>
</dbReference>
<dbReference type="Pfam" id="PF13432">
    <property type="entry name" value="TPR_16"/>
    <property type="match status" value="1"/>
</dbReference>
<dbReference type="SMART" id="SM00028">
    <property type="entry name" value="TPR"/>
    <property type="match status" value="4"/>
</dbReference>
<dbReference type="SUPFAM" id="SSF48452">
    <property type="entry name" value="TPR-like"/>
    <property type="match status" value="1"/>
</dbReference>
<dbReference type="PROSITE" id="PS50005">
    <property type="entry name" value="TPR"/>
    <property type="match status" value="4"/>
</dbReference>
<dbReference type="PROSITE" id="PS50293">
    <property type="entry name" value="TPR_REGION"/>
    <property type="match status" value="1"/>
</dbReference>
<reference key="1">
    <citation type="journal article" date="1995" name="Gene">
        <title>The PAH2 gene is required for peroxisome assembly in the methylotrophic yeast Hansenula polymorpha and encodes a member of the tetratricopeptide repeat family of proteins.</title>
        <authorList>
            <person name="Nuttley W.M."/>
            <person name="Szilard R.K."/>
            <person name="Smith J.J."/>
            <person name="Veenhuis M."/>
            <person name="Rachubinski R.A."/>
        </authorList>
    </citation>
    <scope>NUCLEOTIDE SEQUENCE [GENOMIC DNA]</scope>
    <source>
        <strain>ATCC 34438 / CBS 4732 / DSM 70277 / JCM 3621 / NBRC 1476 / NRRL Y-5445</strain>
    </source>
</reference>
<reference key="2">
    <citation type="journal article" date="1995" name="J. Biol. Chem.">
        <title>The Hansenula polymorpha PER3 gene is essential for the import of PTS1 proteins into the peroxisomal matrix.</title>
        <authorList>
            <person name="Klei I.J."/>
            <person name="der Hilbrands R.E."/>
            <person name="Swaving J."/>
            <person name="Waterham H.R."/>
            <person name="Vrieling E.G."/>
            <person name="Titorenko I."/>
            <person name="Cregg J.M."/>
            <person name="Harder W."/>
            <person name="Veenhuis M."/>
        </authorList>
    </citation>
    <scope>NUCLEOTIDE SEQUENCE [GENOMIC DNA]</scope>
    <source>
        <strain>ATCC 34438 / CBS 4732 / DSM 70277 / JCM 3621 / NBRC 1476 / NRRL Y-5445</strain>
    </source>
</reference>
<feature type="chain" id="PRO_0000106312" description="Peroxisomal targeting signal receptor">
    <location>
        <begin position="1"/>
        <end position="569"/>
    </location>
</feature>
<feature type="repeat" description="TPR 1">
    <location>
        <begin position="272"/>
        <end position="305"/>
    </location>
</feature>
<feature type="repeat" description="TPR 2">
    <location>
        <begin position="306"/>
        <end position="339"/>
    </location>
</feature>
<feature type="repeat" description="TPR 3">
    <location>
        <begin position="340"/>
        <end position="377"/>
    </location>
</feature>
<feature type="repeat" description="TPR 4">
    <location>
        <begin position="378"/>
        <end position="415"/>
    </location>
</feature>
<feature type="repeat" description="TPR 5">
    <location>
        <begin position="416"/>
        <end position="449"/>
    </location>
</feature>
<feature type="repeat" description="TPR 6">
    <location>
        <begin position="450"/>
        <end position="483"/>
    </location>
</feature>
<feature type="repeat" description="TPR 7">
    <location>
        <begin position="484"/>
        <end position="517"/>
    </location>
</feature>
<feature type="region of interest" description="Amphipathic helix 1 (AH1)" evidence="1">
    <location>
        <begin position="10"/>
        <end position="32"/>
    </location>
</feature>
<feature type="region of interest" description="Disordered" evidence="4">
    <location>
        <begin position="23"/>
        <end position="42"/>
    </location>
</feature>
<feature type="region of interest" description="Amphipathic helix 2 (AH2)" evidence="1">
    <location>
        <begin position="57"/>
        <end position="72"/>
    </location>
</feature>
<feature type="region of interest" description="Amphipathic helix 4 (AH4)" evidence="1">
    <location>
        <begin position="218"/>
        <end position="234"/>
    </location>
</feature>
<feature type="short sequence motif" description="WxxxF/Y motif 1" evidence="1">
    <location>
        <begin position="118"/>
        <end position="122"/>
    </location>
</feature>
<feature type="short sequence motif" description="WxxxF/Y motif 2" evidence="1">
    <location>
        <begin position="183"/>
        <end position="187"/>
    </location>
</feature>
<feature type="short sequence motif" description="WxxxF/Y motif 3" evidence="1">
    <location>
        <begin position="243"/>
        <end position="247"/>
    </location>
</feature>
<feature type="cross-link" description="Glycyl cysteine thioester (Cys-Gly) (interchain with G-Cter in ubiquitin)" evidence="2">
    <location>
        <position position="9"/>
    </location>
</feature>
<feature type="cross-link" description="Glycyl lysine isopeptide (Lys-Gly) (interchain with G-Cter in ubiquitin)" evidence="2">
    <location>
        <position position="21"/>
    </location>
</feature>
<feature type="sequence conflict" description="In Ref. 2; AAC49040." evidence="5" ref="2">
    <original>A</original>
    <variation>E</variation>
    <location>
        <position position="202"/>
    </location>
</feature>
<feature type="sequence conflict" description="In Ref. 2; AAC49040." evidence="5" ref="2">
    <original>T</original>
    <variation>A</variation>
    <location>
        <position position="476"/>
    </location>
</feature>
<comment type="function">
    <text evidence="2">Receptor that mediates peroxisomal import of proteins containing a C-terminal PTS1-type tripeptide peroxisomal targeting signal (SKL-type). Binds to cargo proteins containing a PTS1 peroxisomal targeting signal in the cytosol, and translocates them into the peroxisome matrix by passing through the PEX13-PEX14 docking complex along with cargo proteins. PEX5 receptor is then retrotranslocated into the cytosol, leading to release of bound cargo in the peroxisome matrix, and reset for a subsequent peroxisome import cycle.</text>
</comment>
<comment type="subunit">
    <text evidence="2">Interacts (via WxxxF/Y and LVxEF motifs) with PEX14; promoting translocation through the PEX13-PEX14 docking complex.</text>
</comment>
<comment type="interaction">
    <interactant intactId="EBI-7372203">
        <id>Q01495</id>
    </interactant>
    <interactant intactId="EBI-7372223">
        <id>Q3ZJZ2</id>
        <label>PEX20</label>
    </interactant>
    <organismsDiffer>false</organismsDiffer>
    <experiments>3</experiments>
</comment>
<comment type="subcellular location">
    <subcellularLocation>
        <location evidence="2">Cytoplasm</location>
        <location evidence="2">Cytosol</location>
    </subcellularLocation>
    <subcellularLocation>
        <location evidence="2">Peroxisome matrix</location>
    </subcellularLocation>
    <text evidence="2 3">Cycles between the cytosol and the peroxisome matrix. Following binding to cargo proteins containing a PTS1 peroxisomal targeting signal in the cytosol, recruited to the docking complex, composed of PEX13 and PEX14, leading to translocation into the peroxisome matrix along with cargo proteins. Export and recycling to the cytosol is initiated by binding to the PEX2-PEX10-PEX12 ligase complex via its unstructured N-terminus that inserts into the ligase pore and emerges in the cytosol. Cys-9 of PEX5 is then monoubiquitinated, promoting its extraction from peroxisomal membrane by the PEX1-PEX6 AAA ATPase complex (By similarity). Extraction is accompanied by unfolding of the TPR repeats and release of bound cargo in the peroxisome matrix (By similarity). The TPR repeats refold in the cytosol and ubiquitination is removed by deubiquitinating enzyme UBP15, resetting PEX5 for a subsequent import cycle (By similarity).</text>
</comment>
<comment type="domain">
    <text evidence="1">The TPR repeats mediate interaction with proteins containing a C-terminal PTS1-type tripeptide peroxisomal targeting signal (SKL-type).</text>
</comment>
<comment type="domain">
    <text evidence="1">The WxxxF/Y motifs mediate interaction with PEX14, promoting association with the PEX13-PEX14 docking complex.</text>
</comment>
<comment type="domain">
    <text evidence="1">The amphipathic helix 1 and 2 (AH1 and AH2, respectively) are required for PEX5 retrotranslocation and recycling. AH2 mediates interaction with lumenal side of the PEX2-PEX10-PEX12 ligase complex, while AH1 is required for extraction from peroxisomal membrane by the PEX1-PEX6 AAA ATPase complex.</text>
</comment>
<comment type="PTM">
    <text evidence="2">Monoubiquitinated at Cys-9 by PEX2 during PEX5 passage through the retrotranslocation channel: monoubiquitination acts as a signal for PEX5 extraction and is required for proper export from peroxisomes and recycling. When PEX5 recycling is compromised, polyubiquitinated at Lys-21 by PEX10 during its passage through the retrotranslocation channel, leading to its degradation.</text>
</comment>
<comment type="similarity">
    <text evidence="5">Belongs to the peroxisomal targeting signal receptor family.</text>
</comment>
<organism>
    <name type="scientific">Pichia angusta</name>
    <name type="common">Yeast</name>
    <name type="synonym">Hansenula polymorpha</name>
    <dbReference type="NCBI Taxonomy" id="870730"/>
    <lineage>
        <taxon>Eukaryota</taxon>
        <taxon>Fungi</taxon>
        <taxon>Dikarya</taxon>
        <taxon>Ascomycota</taxon>
        <taxon>Saccharomycotina</taxon>
        <taxon>Pichiomycetes</taxon>
        <taxon>Pichiales</taxon>
        <taxon>Pichiaceae</taxon>
        <taxon>Ogataea</taxon>
    </lineage>
</organism>
<sequence length="569" mass="63910">MSFLGGSECAANANPLAQFFKQSQHDTSLEQSLRNSAHDTHQNAQIRAPVAMNEAERAHMEQFMNQSTPFNFQPMANELRMIQPDLQTQTTPALRGPRAQNPVPLQIPGQAQPQVSGWSSEFQNTATSQVTHSPSPVSQVRMRSMGMAPRLHLRPFSSANGPIQASSMTNSVMQEDTSQQVDWEQQFKEMEEMEEMEEATAAMQQPAEETVSAQESAFDQVWDNIQETYADNMLSNDEFQAQWEKDFEKYAQTRLNYGEYTFEENNQFRNNLDAYEIGIKLMESGAKLSEAALAFEAAVEQNPGHVDAWLRLGQVQTQNEKELAGIAALEKCLELSPQNLVALMTLAISYINEGYDNAAFATLERWIETKYPEVAERARNANPDIQADDRFSLNKRVTQLFIKAAQLSPEGANMDSEVQTGLGVLFYSMEEYSKTLDCFQAAIEHNPNDALAWNRLGASLANSNKPEQAIEAYSRTLQLNPNFVRARYNLGVSFINMGMYRDAVDHLLTGLSMHEVESLDGSSSVARSNQSTSLIETLKRAFLAMDRRDLIDKVKPGLNVESFRKTYDI</sequence>
<protein>
    <recommendedName>
        <fullName>Peroxisomal targeting signal receptor</fullName>
        <shortName>PTS1 receptor</shortName>
        <shortName>PTS1R</shortName>
    </recommendedName>
    <alternativeName>
        <fullName>Peroxin-5</fullName>
    </alternativeName>
    <alternativeName>
        <fullName>Peroxisomal protein PAH2</fullName>
    </alternativeName>
</protein>
<name>PEX5_PICAN</name>
<gene>
    <name type="primary">PEX5</name>
    <name type="synonym">PAH2</name>
    <name type="synonym">PER3</name>
</gene>
<proteinExistence type="evidence at protein level"/>